<organism>
    <name type="scientific">Salmonella heidelberg (strain SL476)</name>
    <dbReference type="NCBI Taxonomy" id="454169"/>
    <lineage>
        <taxon>Bacteria</taxon>
        <taxon>Pseudomonadati</taxon>
        <taxon>Pseudomonadota</taxon>
        <taxon>Gammaproteobacteria</taxon>
        <taxon>Enterobacterales</taxon>
        <taxon>Enterobacteriaceae</taxon>
        <taxon>Salmonella</taxon>
    </lineage>
</organism>
<comment type="function">
    <text evidence="1">Major role in the synthesis of nucleoside triphosphates other than ATP. The ATP gamma phosphate is transferred to the NDP beta phosphate via a ping-pong mechanism, using a phosphorylated active-site intermediate.</text>
</comment>
<comment type="catalytic activity">
    <reaction evidence="1">
        <text>a 2'-deoxyribonucleoside 5'-diphosphate + ATP = a 2'-deoxyribonucleoside 5'-triphosphate + ADP</text>
        <dbReference type="Rhea" id="RHEA:44640"/>
        <dbReference type="ChEBI" id="CHEBI:30616"/>
        <dbReference type="ChEBI" id="CHEBI:61560"/>
        <dbReference type="ChEBI" id="CHEBI:73316"/>
        <dbReference type="ChEBI" id="CHEBI:456216"/>
        <dbReference type="EC" id="2.7.4.6"/>
    </reaction>
</comment>
<comment type="catalytic activity">
    <reaction evidence="1">
        <text>a ribonucleoside 5'-diphosphate + ATP = a ribonucleoside 5'-triphosphate + ADP</text>
        <dbReference type="Rhea" id="RHEA:18113"/>
        <dbReference type="ChEBI" id="CHEBI:30616"/>
        <dbReference type="ChEBI" id="CHEBI:57930"/>
        <dbReference type="ChEBI" id="CHEBI:61557"/>
        <dbReference type="ChEBI" id="CHEBI:456216"/>
        <dbReference type="EC" id="2.7.4.6"/>
    </reaction>
</comment>
<comment type="cofactor">
    <cofactor evidence="1">
        <name>Mg(2+)</name>
        <dbReference type="ChEBI" id="CHEBI:18420"/>
    </cofactor>
</comment>
<comment type="subunit">
    <text evidence="1">Homotetramer.</text>
</comment>
<comment type="subcellular location">
    <subcellularLocation>
        <location evidence="1">Cytoplasm</location>
    </subcellularLocation>
</comment>
<comment type="similarity">
    <text evidence="1">Belongs to the NDK family.</text>
</comment>
<feature type="chain" id="PRO_1000125013" description="Nucleoside diphosphate kinase">
    <location>
        <begin position="1"/>
        <end position="143"/>
    </location>
</feature>
<feature type="active site" description="Pros-phosphohistidine intermediate" evidence="1">
    <location>
        <position position="117"/>
    </location>
</feature>
<feature type="binding site" evidence="1">
    <location>
        <position position="11"/>
    </location>
    <ligand>
        <name>ATP</name>
        <dbReference type="ChEBI" id="CHEBI:30616"/>
    </ligand>
</feature>
<feature type="binding site" evidence="1">
    <location>
        <position position="59"/>
    </location>
    <ligand>
        <name>ATP</name>
        <dbReference type="ChEBI" id="CHEBI:30616"/>
    </ligand>
</feature>
<feature type="binding site" evidence="1">
    <location>
        <position position="87"/>
    </location>
    <ligand>
        <name>ATP</name>
        <dbReference type="ChEBI" id="CHEBI:30616"/>
    </ligand>
</feature>
<feature type="binding site" evidence="1">
    <location>
        <position position="93"/>
    </location>
    <ligand>
        <name>ATP</name>
        <dbReference type="ChEBI" id="CHEBI:30616"/>
    </ligand>
</feature>
<feature type="binding site" evidence="1">
    <location>
        <position position="104"/>
    </location>
    <ligand>
        <name>ATP</name>
        <dbReference type="ChEBI" id="CHEBI:30616"/>
    </ligand>
</feature>
<feature type="binding site" evidence="1">
    <location>
        <position position="114"/>
    </location>
    <ligand>
        <name>ATP</name>
        <dbReference type="ChEBI" id="CHEBI:30616"/>
    </ligand>
</feature>
<dbReference type="EC" id="2.7.4.6" evidence="1"/>
<dbReference type="EMBL" id="CP001120">
    <property type="protein sequence ID" value="ACF66829.1"/>
    <property type="molecule type" value="Genomic_DNA"/>
</dbReference>
<dbReference type="RefSeq" id="WP_000963846.1">
    <property type="nucleotide sequence ID" value="NC_011083.1"/>
</dbReference>
<dbReference type="SMR" id="B4TD96"/>
<dbReference type="KEGG" id="seh:SeHA_C2784"/>
<dbReference type="HOGENOM" id="CLU_060216_8_1_6"/>
<dbReference type="Proteomes" id="UP000001866">
    <property type="component" value="Chromosome"/>
</dbReference>
<dbReference type="GO" id="GO:0005737">
    <property type="term" value="C:cytoplasm"/>
    <property type="evidence" value="ECO:0007669"/>
    <property type="project" value="UniProtKB-SubCell"/>
</dbReference>
<dbReference type="GO" id="GO:0005524">
    <property type="term" value="F:ATP binding"/>
    <property type="evidence" value="ECO:0007669"/>
    <property type="project" value="UniProtKB-UniRule"/>
</dbReference>
<dbReference type="GO" id="GO:0046872">
    <property type="term" value="F:metal ion binding"/>
    <property type="evidence" value="ECO:0007669"/>
    <property type="project" value="UniProtKB-KW"/>
</dbReference>
<dbReference type="GO" id="GO:0004550">
    <property type="term" value="F:nucleoside diphosphate kinase activity"/>
    <property type="evidence" value="ECO:0007669"/>
    <property type="project" value="UniProtKB-UniRule"/>
</dbReference>
<dbReference type="GO" id="GO:0006241">
    <property type="term" value="P:CTP biosynthetic process"/>
    <property type="evidence" value="ECO:0007669"/>
    <property type="project" value="UniProtKB-UniRule"/>
</dbReference>
<dbReference type="GO" id="GO:0006183">
    <property type="term" value="P:GTP biosynthetic process"/>
    <property type="evidence" value="ECO:0007669"/>
    <property type="project" value="UniProtKB-UniRule"/>
</dbReference>
<dbReference type="GO" id="GO:0006228">
    <property type="term" value="P:UTP biosynthetic process"/>
    <property type="evidence" value="ECO:0007669"/>
    <property type="project" value="UniProtKB-UniRule"/>
</dbReference>
<dbReference type="CDD" id="cd04413">
    <property type="entry name" value="NDPk_I"/>
    <property type="match status" value="1"/>
</dbReference>
<dbReference type="FunFam" id="3.30.70.141:FF:000001">
    <property type="entry name" value="Nucleoside diphosphate kinase"/>
    <property type="match status" value="1"/>
</dbReference>
<dbReference type="Gene3D" id="3.30.70.141">
    <property type="entry name" value="Nucleoside diphosphate kinase-like domain"/>
    <property type="match status" value="1"/>
</dbReference>
<dbReference type="HAMAP" id="MF_00451">
    <property type="entry name" value="NDP_kinase"/>
    <property type="match status" value="1"/>
</dbReference>
<dbReference type="InterPro" id="IPR034907">
    <property type="entry name" value="NDK-like_dom"/>
</dbReference>
<dbReference type="InterPro" id="IPR036850">
    <property type="entry name" value="NDK-like_dom_sf"/>
</dbReference>
<dbReference type="InterPro" id="IPR001564">
    <property type="entry name" value="Nucleoside_diP_kinase"/>
</dbReference>
<dbReference type="InterPro" id="IPR023005">
    <property type="entry name" value="Nucleoside_diP_kinase_AS"/>
</dbReference>
<dbReference type="NCBIfam" id="NF001908">
    <property type="entry name" value="PRK00668.1"/>
    <property type="match status" value="1"/>
</dbReference>
<dbReference type="PANTHER" id="PTHR46161">
    <property type="entry name" value="NUCLEOSIDE DIPHOSPHATE KINASE"/>
    <property type="match status" value="1"/>
</dbReference>
<dbReference type="PANTHER" id="PTHR46161:SF3">
    <property type="entry name" value="NUCLEOSIDE DIPHOSPHATE KINASE DDB_G0292928-RELATED"/>
    <property type="match status" value="1"/>
</dbReference>
<dbReference type="Pfam" id="PF00334">
    <property type="entry name" value="NDK"/>
    <property type="match status" value="1"/>
</dbReference>
<dbReference type="PRINTS" id="PR01243">
    <property type="entry name" value="NUCDPKINASE"/>
</dbReference>
<dbReference type="SMART" id="SM00562">
    <property type="entry name" value="NDK"/>
    <property type="match status" value="1"/>
</dbReference>
<dbReference type="SUPFAM" id="SSF54919">
    <property type="entry name" value="Nucleoside diphosphate kinase, NDK"/>
    <property type="match status" value="1"/>
</dbReference>
<dbReference type="PROSITE" id="PS00469">
    <property type="entry name" value="NDPK"/>
    <property type="match status" value="1"/>
</dbReference>
<dbReference type="PROSITE" id="PS51374">
    <property type="entry name" value="NDPK_LIKE"/>
    <property type="match status" value="1"/>
</dbReference>
<protein>
    <recommendedName>
        <fullName evidence="1">Nucleoside diphosphate kinase</fullName>
        <shortName evidence="1">NDK</shortName>
        <shortName evidence="1">NDP kinase</shortName>
        <ecNumber evidence="1">2.7.4.6</ecNumber>
    </recommendedName>
    <alternativeName>
        <fullName evidence="1">Nucleoside-2-P kinase</fullName>
    </alternativeName>
</protein>
<proteinExistence type="inferred from homology"/>
<sequence>MAIERTFSIIKPNAVAKNVIGSIFARFEAAGFKIVGTKMLHLTVEQARGFYAEHDGKPFFDGLVEFMTSGPIVVSVLESENAVQRHRDLLGATNPANALAGTLRADYADSLTENGTHGSDSLESAQREIAFFFGEGEVCPRTR</sequence>
<name>NDK_SALHS</name>
<gene>
    <name evidence="1" type="primary">ndk</name>
    <name type="ordered locus">SeHA_C2784</name>
</gene>
<keyword id="KW-0067">ATP-binding</keyword>
<keyword id="KW-0963">Cytoplasm</keyword>
<keyword id="KW-0418">Kinase</keyword>
<keyword id="KW-0460">Magnesium</keyword>
<keyword id="KW-0479">Metal-binding</keyword>
<keyword id="KW-0546">Nucleotide metabolism</keyword>
<keyword id="KW-0547">Nucleotide-binding</keyword>
<keyword id="KW-0597">Phosphoprotein</keyword>
<keyword id="KW-0808">Transferase</keyword>
<accession>B4TD96</accession>
<evidence type="ECO:0000255" key="1">
    <source>
        <dbReference type="HAMAP-Rule" id="MF_00451"/>
    </source>
</evidence>
<reference key="1">
    <citation type="journal article" date="2011" name="J. Bacteriol.">
        <title>Comparative genomics of 28 Salmonella enterica isolates: evidence for CRISPR-mediated adaptive sublineage evolution.</title>
        <authorList>
            <person name="Fricke W.F."/>
            <person name="Mammel M.K."/>
            <person name="McDermott P.F."/>
            <person name="Tartera C."/>
            <person name="White D.G."/>
            <person name="Leclerc J.E."/>
            <person name="Ravel J."/>
            <person name="Cebula T.A."/>
        </authorList>
    </citation>
    <scope>NUCLEOTIDE SEQUENCE [LARGE SCALE GENOMIC DNA]</scope>
    <source>
        <strain>SL476</strain>
    </source>
</reference>